<evidence type="ECO:0000250" key="1"/>
<evidence type="ECO:0000250" key="2">
    <source>
        <dbReference type="UniProtKB" id="P62805"/>
    </source>
</evidence>
<evidence type="ECO:0000256" key="3">
    <source>
        <dbReference type="SAM" id="MobiDB-lite"/>
    </source>
</evidence>
<evidence type="ECO:0000305" key="4"/>
<feature type="initiator methionine" description="Removed" evidence="1">
    <location>
        <position position="1"/>
    </location>
</feature>
<feature type="chain" id="PRO_0000158351" description="Histone H4">
    <location>
        <begin position="2"/>
        <end position="103"/>
    </location>
</feature>
<feature type="DNA-binding region">
    <location>
        <begin position="17"/>
        <end position="21"/>
    </location>
</feature>
<feature type="region of interest" description="Disordered" evidence="3">
    <location>
        <begin position="1"/>
        <end position="20"/>
    </location>
</feature>
<feature type="compositionally biased region" description="Gly residues" evidence="3">
    <location>
        <begin position="1"/>
        <end position="14"/>
    </location>
</feature>
<feature type="modified residue" description="N-acetylserine" evidence="1">
    <location>
        <position position="2"/>
    </location>
</feature>
<feature type="modified residue" description="N6-acetyl-N6-methyllysine; alternate" evidence="2">
    <location>
        <position position="6"/>
    </location>
</feature>
<feature type="modified residue" description="N6-acetyllysine" evidence="1">
    <location>
        <position position="6"/>
    </location>
</feature>
<feature type="modified residue" description="N6-acetyllysine" evidence="1">
    <location>
        <position position="9"/>
    </location>
</feature>
<feature type="modified residue" description="N6-acetyl-N6-methyllysine; alternate" evidence="2">
    <location>
        <position position="13"/>
    </location>
</feature>
<feature type="modified residue" description="N6-acetyllysine" evidence="1">
    <location>
        <position position="13"/>
    </location>
</feature>
<feature type="modified residue" description="N6-acetyllysine" evidence="1">
    <location>
        <position position="17"/>
    </location>
</feature>
<feature type="modified residue" description="N6-methylated lysine" evidence="1">
    <location>
        <position position="21"/>
    </location>
</feature>
<name>H4_PLADU</name>
<comment type="function">
    <text>Core component of nucleosome. Nucleosomes wrap and compact DNA into chromatin, limiting DNA accessibility to the cellular machineries which require DNA as a template. Histones thereby play a central role in transcription regulation, DNA repair, DNA replication and chromosomal stability. DNA accessibility is regulated via a complex set of post-translational modifications of histones, also called histone code, and nucleosome remodeling.</text>
</comment>
<comment type="subunit">
    <text>The nucleosome is a histone octamer containing two molecules each of H2A, H2B, H3 and H4 assembled in one H3-H4 heterotetramer and two H2A-H2B heterodimers. The octamer wraps approximately 147 bp of DNA.</text>
</comment>
<comment type="subcellular location">
    <subcellularLocation>
        <location evidence="1">Nucleus</location>
    </subcellularLocation>
    <subcellularLocation>
        <location evidence="1">Chromosome</location>
    </subcellularLocation>
</comment>
<comment type="similarity">
    <text evidence="4">Belongs to the histone H4 family.</text>
</comment>
<keyword id="KW-0007">Acetylation</keyword>
<keyword id="KW-0158">Chromosome</keyword>
<keyword id="KW-0238">DNA-binding</keyword>
<keyword id="KW-0488">Methylation</keyword>
<keyword id="KW-0544">Nucleosome core</keyword>
<keyword id="KW-0539">Nucleus</keyword>
<sequence length="103" mass="11367">MSGRGKGGKGLGKGGAKRHRKVLRDNIQGITKPAIRRLARRGGVKRISGLIYEETRGVLKVFLENVIRDAVTYTEHAKRKTVTAMDVVYALKRQGRTLYGFGG</sequence>
<proteinExistence type="inferred from homology"/>
<organism>
    <name type="scientific">Platynereis dumerilii</name>
    <name type="common">Dumeril's clam worm</name>
    <dbReference type="NCBI Taxonomy" id="6359"/>
    <lineage>
        <taxon>Eukaryota</taxon>
        <taxon>Metazoa</taxon>
        <taxon>Spiralia</taxon>
        <taxon>Lophotrochozoa</taxon>
        <taxon>Annelida</taxon>
        <taxon>Polychaeta</taxon>
        <taxon>Errantia</taxon>
        <taxon>Phyllodocida</taxon>
        <taxon>Nereididae</taxon>
        <taxon>Platynereis</taxon>
    </lineage>
</organism>
<accession>P62795</accession>
<accession>P02304</accession>
<accession>P02305</accession>
<protein>
    <recommendedName>
        <fullName>Histone H4</fullName>
    </recommendedName>
</protein>
<reference key="1">
    <citation type="journal article" date="1990" name="Eur. J. Biochem.">
        <title>Organization and complete nucleotide sequence of the core-histone-gene cluster of the annelid Platynereis dumerilii.</title>
        <authorList>
            <person name="Sellos D."/>
            <person name="Krawetz S.A."/>
            <person name="Dixon G.H."/>
        </authorList>
    </citation>
    <scope>NUCLEOTIDE SEQUENCE [GENOMIC DNA]</scope>
    <source>
        <tissue>Sperm</tissue>
    </source>
</reference>
<dbReference type="EMBL" id="X53330">
    <property type="protein sequence ID" value="CAA37414.1"/>
    <property type="molecule type" value="Genomic_DNA"/>
</dbReference>
<dbReference type="SMR" id="P62795"/>
<dbReference type="MINT" id="P62795"/>
<dbReference type="GO" id="GO:0000786">
    <property type="term" value="C:nucleosome"/>
    <property type="evidence" value="ECO:0007669"/>
    <property type="project" value="UniProtKB-KW"/>
</dbReference>
<dbReference type="GO" id="GO:0005634">
    <property type="term" value="C:nucleus"/>
    <property type="evidence" value="ECO:0007669"/>
    <property type="project" value="UniProtKB-SubCell"/>
</dbReference>
<dbReference type="GO" id="GO:0003677">
    <property type="term" value="F:DNA binding"/>
    <property type="evidence" value="ECO:0007669"/>
    <property type="project" value="UniProtKB-KW"/>
</dbReference>
<dbReference type="GO" id="GO:0046982">
    <property type="term" value="F:protein heterodimerization activity"/>
    <property type="evidence" value="ECO:0007669"/>
    <property type="project" value="InterPro"/>
</dbReference>
<dbReference type="GO" id="GO:0030527">
    <property type="term" value="F:structural constituent of chromatin"/>
    <property type="evidence" value="ECO:0007669"/>
    <property type="project" value="InterPro"/>
</dbReference>
<dbReference type="CDD" id="cd22912">
    <property type="entry name" value="HFD_H4"/>
    <property type="match status" value="1"/>
</dbReference>
<dbReference type="FunFam" id="1.10.20.10:FF:000002">
    <property type="entry name" value="Histone H4"/>
    <property type="match status" value="1"/>
</dbReference>
<dbReference type="Gene3D" id="1.10.20.10">
    <property type="entry name" value="Histone, subunit A"/>
    <property type="match status" value="1"/>
</dbReference>
<dbReference type="InterPro" id="IPR035425">
    <property type="entry name" value="CENP-T/H4_C"/>
</dbReference>
<dbReference type="InterPro" id="IPR009072">
    <property type="entry name" value="Histone-fold"/>
</dbReference>
<dbReference type="InterPro" id="IPR001951">
    <property type="entry name" value="Histone_H4"/>
</dbReference>
<dbReference type="InterPro" id="IPR019809">
    <property type="entry name" value="Histone_H4_CS"/>
</dbReference>
<dbReference type="InterPro" id="IPR004823">
    <property type="entry name" value="TAF_TATA-bd_Histone-like_dom"/>
</dbReference>
<dbReference type="PANTHER" id="PTHR10484">
    <property type="entry name" value="HISTONE H4"/>
    <property type="match status" value="1"/>
</dbReference>
<dbReference type="Pfam" id="PF15511">
    <property type="entry name" value="CENP-T_C"/>
    <property type="match status" value="1"/>
</dbReference>
<dbReference type="PRINTS" id="PR00623">
    <property type="entry name" value="HISTONEH4"/>
</dbReference>
<dbReference type="SMART" id="SM00417">
    <property type="entry name" value="H4"/>
    <property type="match status" value="1"/>
</dbReference>
<dbReference type="SMART" id="SM00803">
    <property type="entry name" value="TAF"/>
    <property type="match status" value="1"/>
</dbReference>
<dbReference type="SUPFAM" id="SSF47113">
    <property type="entry name" value="Histone-fold"/>
    <property type="match status" value="1"/>
</dbReference>
<dbReference type="PROSITE" id="PS00047">
    <property type="entry name" value="HISTONE_H4"/>
    <property type="match status" value="1"/>
</dbReference>